<comment type="subcellular location">
    <subcellularLocation>
        <location evidence="1">Periplasm</location>
    </subcellularLocation>
</comment>
<comment type="similarity">
    <text evidence="1">Belongs to the UPF0194 family.</text>
</comment>
<feature type="signal peptide" evidence="1">
    <location>
        <begin position="1"/>
        <end position="16"/>
    </location>
</feature>
<feature type="chain" id="PRO_1000051813" description="UPF0194 membrane protein YbhG">
    <location>
        <begin position="17"/>
        <end position="332"/>
    </location>
</feature>
<feature type="coiled-coil region" evidence="1">
    <location>
        <begin position="108"/>
        <end position="209"/>
    </location>
</feature>
<organism>
    <name type="scientific">Shigella boydii serotype 4 (strain Sb227)</name>
    <dbReference type="NCBI Taxonomy" id="300268"/>
    <lineage>
        <taxon>Bacteria</taxon>
        <taxon>Pseudomonadati</taxon>
        <taxon>Pseudomonadota</taxon>
        <taxon>Gammaproteobacteria</taxon>
        <taxon>Enterobacterales</taxon>
        <taxon>Enterobacteriaceae</taxon>
        <taxon>Shigella</taxon>
    </lineage>
</organism>
<accession>Q323Z9</accession>
<name>YBHG_SHIBS</name>
<evidence type="ECO:0000255" key="1">
    <source>
        <dbReference type="HAMAP-Rule" id="MF_01304"/>
    </source>
</evidence>
<keyword id="KW-0175">Coiled coil</keyword>
<keyword id="KW-0574">Periplasm</keyword>
<keyword id="KW-0732">Signal</keyword>
<sequence>MMKKPVVIGLAVVVLAAVVAGGYWWYQSRQDNGLKLYGNVDIRTVNLSFRVGGRVESLAVDEGDAIKAGQVLGELDHKPYEIALMQVKAGVSVAQAQYDLMLAGYRDEEIAQAAAAVKQAQAAYDYAQNFYNRQQGLWKSRTISANDLENARSSRNQAQATLKSAQDKLRQYRSGNREQDIAQAKASLEQAQAQLAQAELNLQDSTLIAPSDGTLLTRAVEPGTVLNEGGTVFTVSLTRPVWVRAYVDERNLDQAQPGRKVLLYTDGRPDKPYHGQIGFVSPTAEFTPKTVETPDLRTDLVYRLRIVVTDADDALRQGMPVTVQFGNEAGHE</sequence>
<dbReference type="EMBL" id="CP000036">
    <property type="protein sequence ID" value="ABB65359.1"/>
    <property type="molecule type" value="Genomic_DNA"/>
</dbReference>
<dbReference type="SMR" id="Q323Z9"/>
<dbReference type="KEGG" id="sbo:SBO_0683"/>
<dbReference type="HOGENOM" id="CLU_018816_6_3_6"/>
<dbReference type="Proteomes" id="UP000007067">
    <property type="component" value="Chromosome"/>
</dbReference>
<dbReference type="GO" id="GO:0042597">
    <property type="term" value="C:periplasmic space"/>
    <property type="evidence" value="ECO:0007669"/>
    <property type="project" value="UniProtKB-SubCell"/>
</dbReference>
<dbReference type="FunFam" id="1.10.287.470:FF:000004">
    <property type="entry name" value="UPF0194 membrane protein YbhG"/>
    <property type="match status" value="1"/>
</dbReference>
<dbReference type="FunFam" id="2.40.30.170:FF:000005">
    <property type="entry name" value="UPF0194 membrane protein YbhG"/>
    <property type="match status" value="1"/>
</dbReference>
<dbReference type="FunFam" id="2.40.50.100:FF:000025">
    <property type="entry name" value="UPF0194 membrane protein YbhG"/>
    <property type="match status" value="1"/>
</dbReference>
<dbReference type="Gene3D" id="2.40.30.170">
    <property type="match status" value="1"/>
</dbReference>
<dbReference type="Gene3D" id="2.40.50.100">
    <property type="match status" value="2"/>
</dbReference>
<dbReference type="Gene3D" id="1.10.287.470">
    <property type="entry name" value="Helix hairpin bin"/>
    <property type="match status" value="2"/>
</dbReference>
<dbReference type="HAMAP" id="MF_01304">
    <property type="entry name" value="UPF0194"/>
    <property type="match status" value="1"/>
</dbReference>
<dbReference type="InterPro" id="IPR032317">
    <property type="entry name" value="CusB_D23"/>
</dbReference>
<dbReference type="InterPro" id="IPR022936">
    <property type="entry name" value="UPF0194_membrane_YbhG"/>
</dbReference>
<dbReference type="InterPro" id="IPR050465">
    <property type="entry name" value="UPF0194_transport"/>
</dbReference>
<dbReference type="NCBIfam" id="NF002939">
    <property type="entry name" value="PRK03598.1"/>
    <property type="match status" value="1"/>
</dbReference>
<dbReference type="PANTHER" id="PTHR32347">
    <property type="entry name" value="EFFLUX SYSTEM COMPONENT YKNX-RELATED"/>
    <property type="match status" value="1"/>
</dbReference>
<dbReference type="PANTHER" id="PTHR32347:SF29">
    <property type="entry name" value="UPF0194 MEMBRANE PROTEIN YBHG"/>
    <property type="match status" value="1"/>
</dbReference>
<dbReference type="Pfam" id="PF16576">
    <property type="entry name" value="HlyD_D23"/>
    <property type="match status" value="1"/>
</dbReference>
<dbReference type="SUPFAM" id="SSF111369">
    <property type="entry name" value="HlyD-like secretion proteins"/>
    <property type="match status" value="2"/>
</dbReference>
<dbReference type="SUPFAM" id="SSF56954">
    <property type="entry name" value="Outer membrane efflux proteins (OEP)"/>
    <property type="match status" value="1"/>
</dbReference>
<protein>
    <recommendedName>
        <fullName evidence="1">UPF0194 membrane protein YbhG</fullName>
    </recommendedName>
</protein>
<gene>
    <name evidence="1" type="primary">ybhG</name>
    <name type="ordered locus">SBO_0683</name>
</gene>
<proteinExistence type="inferred from homology"/>
<reference key="1">
    <citation type="journal article" date="2005" name="Nucleic Acids Res.">
        <title>Genome dynamics and diversity of Shigella species, the etiologic agents of bacillary dysentery.</title>
        <authorList>
            <person name="Yang F."/>
            <person name="Yang J."/>
            <person name="Zhang X."/>
            <person name="Chen L."/>
            <person name="Jiang Y."/>
            <person name="Yan Y."/>
            <person name="Tang X."/>
            <person name="Wang J."/>
            <person name="Xiong Z."/>
            <person name="Dong J."/>
            <person name="Xue Y."/>
            <person name="Zhu Y."/>
            <person name="Xu X."/>
            <person name="Sun L."/>
            <person name="Chen S."/>
            <person name="Nie H."/>
            <person name="Peng J."/>
            <person name="Xu J."/>
            <person name="Wang Y."/>
            <person name="Yuan Z."/>
            <person name="Wen Y."/>
            <person name="Yao Z."/>
            <person name="Shen Y."/>
            <person name="Qiang B."/>
            <person name="Hou Y."/>
            <person name="Yu J."/>
            <person name="Jin Q."/>
        </authorList>
    </citation>
    <scope>NUCLEOTIDE SEQUENCE [LARGE SCALE GENOMIC DNA]</scope>
    <source>
        <strain>Sb227</strain>
    </source>
</reference>